<name>GCH1_ARATH</name>
<keyword id="KW-0025">Alternative splicing</keyword>
<keyword id="KW-0342">GTP-binding</keyword>
<keyword id="KW-0378">Hydrolase</keyword>
<keyword id="KW-0479">Metal-binding</keyword>
<keyword id="KW-0547">Nucleotide-binding</keyword>
<keyword id="KW-1185">Reference proteome</keyword>
<keyword id="KW-0783">Tetrahydrobiopterin biosynthesis</keyword>
<keyword id="KW-0862">Zinc</keyword>
<evidence type="ECO:0000250" key="1">
    <source>
        <dbReference type="UniProtKB" id="P30793"/>
    </source>
</evidence>
<evidence type="ECO:0000250" key="2">
    <source>
        <dbReference type="UniProtKB" id="Q8VYU3"/>
    </source>
</evidence>
<evidence type="ECO:0000269" key="3">
    <source>
    </source>
</evidence>
<evidence type="ECO:0000303" key="4">
    <source>
    </source>
</evidence>
<evidence type="ECO:0000305" key="5"/>
<evidence type="ECO:0000312" key="6">
    <source>
        <dbReference type="Araport" id="AT3G07270"/>
    </source>
</evidence>
<evidence type="ECO:0000312" key="7">
    <source>
        <dbReference type="EMBL" id="AAF20219.1"/>
    </source>
</evidence>
<reference key="1">
    <citation type="journal article" date="2002" name="Proc. Natl. Acad. Sci. U.S.A.">
        <title>Folate synthesis in plants: the first step of the pterin branch is mediated by a unique bimodular GTP cyclohydrolase I.</title>
        <authorList>
            <person name="Basset G."/>
            <person name="Quinlivan E.P."/>
            <person name="Ziemak M.J."/>
            <person name="Diaz De La Garza R."/>
            <person name="Fischer M."/>
            <person name="Schiffmann S."/>
            <person name="Bacher A."/>
            <person name="Gregory J.F."/>
            <person name="Hanson A.D."/>
        </authorList>
    </citation>
    <scope>NUCLEOTIDE SEQUENCE [MRNA]</scope>
    <scope>FUNCTION</scope>
    <scope>CATALYTIC ACTIVITY</scope>
</reference>
<reference key="2">
    <citation type="journal article" date="2000" name="Nature">
        <title>Sequence and analysis of chromosome 3 of the plant Arabidopsis thaliana.</title>
        <authorList>
            <person name="Salanoubat M."/>
            <person name="Lemcke K."/>
            <person name="Rieger M."/>
            <person name="Ansorge W."/>
            <person name="Unseld M."/>
            <person name="Fartmann B."/>
            <person name="Valle G."/>
            <person name="Bloecker H."/>
            <person name="Perez-Alonso M."/>
            <person name="Obermaier B."/>
            <person name="Delseny M."/>
            <person name="Boutry M."/>
            <person name="Grivell L.A."/>
            <person name="Mache R."/>
            <person name="Puigdomenech P."/>
            <person name="De Simone V."/>
            <person name="Choisne N."/>
            <person name="Artiguenave F."/>
            <person name="Robert C."/>
            <person name="Brottier P."/>
            <person name="Wincker P."/>
            <person name="Cattolico L."/>
            <person name="Weissenbach J."/>
            <person name="Saurin W."/>
            <person name="Quetier F."/>
            <person name="Schaefer M."/>
            <person name="Mueller-Auer S."/>
            <person name="Gabel C."/>
            <person name="Fuchs M."/>
            <person name="Benes V."/>
            <person name="Wurmbach E."/>
            <person name="Drzonek H."/>
            <person name="Erfle H."/>
            <person name="Jordan N."/>
            <person name="Bangert S."/>
            <person name="Wiedelmann R."/>
            <person name="Kranz H."/>
            <person name="Voss H."/>
            <person name="Holland R."/>
            <person name="Brandt P."/>
            <person name="Nyakatura G."/>
            <person name="Vezzi A."/>
            <person name="D'Angelo M."/>
            <person name="Pallavicini A."/>
            <person name="Toppo S."/>
            <person name="Simionati B."/>
            <person name="Conrad A."/>
            <person name="Hornischer K."/>
            <person name="Kauer G."/>
            <person name="Loehnert T.-H."/>
            <person name="Nordsiek G."/>
            <person name="Reichelt J."/>
            <person name="Scharfe M."/>
            <person name="Schoen O."/>
            <person name="Bargues M."/>
            <person name="Terol J."/>
            <person name="Climent J."/>
            <person name="Navarro P."/>
            <person name="Collado C."/>
            <person name="Perez-Perez A."/>
            <person name="Ottenwaelder B."/>
            <person name="Duchemin D."/>
            <person name="Cooke R."/>
            <person name="Laudie M."/>
            <person name="Berger-Llauro C."/>
            <person name="Purnelle B."/>
            <person name="Masuy D."/>
            <person name="de Haan M."/>
            <person name="Maarse A.C."/>
            <person name="Alcaraz J.-P."/>
            <person name="Cottet A."/>
            <person name="Casacuberta E."/>
            <person name="Monfort A."/>
            <person name="Argiriou A."/>
            <person name="Flores M."/>
            <person name="Liguori R."/>
            <person name="Vitale D."/>
            <person name="Mannhaupt G."/>
            <person name="Haase D."/>
            <person name="Schoof H."/>
            <person name="Rudd S."/>
            <person name="Zaccaria P."/>
            <person name="Mewes H.-W."/>
            <person name="Mayer K.F.X."/>
            <person name="Kaul S."/>
            <person name="Town C.D."/>
            <person name="Koo H.L."/>
            <person name="Tallon L.J."/>
            <person name="Jenkins J."/>
            <person name="Rooney T."/>
            <person name="Rizzo M."/>
            <person name="Walts A."/>
            <person name="Utterback T."/>
            <person name="Fujii C.Y."/>
            <person name="Shea T.P."/>
            <person name="Creasy T.H."/>
            <person name="Haas B."/>
            <person name="Maiti R."/>
            <person name="Wu D."/>
            <person name="Peterson J."/>
            <person name="Van Aken S."/>
            <person name="Pai G."/>
            <person name="Militscher J."/>
            <person name="Sellers P."/>
            <person name="Gill J.E."/>
            <person name="Feldblyum T.V."/>
            <person name="Preuss D."/>
            <person name="Lin X."/>
            <person name="Nierman W.C."/>
            <person name="Salzberg S.L."/>
            <person name="White O."/>
            <person name="Venter J.C."/>
            <person name="Fraser C.M."/>
            <person name="Kaneko T."/>
            <person name="Nakamura Y."/>
            <person name="Sato S."/>
            <person name="Kato T."/>
            <person name="Asamizu E."/>
            <person name="Sasamoto S."/>
            <person name="Kimura T."/>
            <person name="Idesawa K."/>
            <person name="Kawashima K."/>
            <person name="Kishida Y."/>
            <person name="Kiyokawa C."/>
            <person name="Kohara M."/>
            <person name="Matsumoto M."/>
            <person name="Matsuno A."/>
            <person name="Muraki A."/>
            <person name="Nakayama S."/>
            <person name="Nakazaki N."/>
            <person name="Shinpo S."/>
            <person name="Takeuchi C."/>
            <person name="Wada T."/>
            <person name="Watanabe A."/>
            <person name="Yamada M."/>
            <person name="Yasuda M."/>
            <person name="Tabata S."/>
        </authorList>
    </citation>
    <scope>NUCLEOTIDE SEQUENCE [LARGE SCALE GENOMIC DNA]</scope>
    <source>
        <strain>cv. Columbia</strain>
    </source>
</reference>
<reference key="3">
    <citation type="journal article" date="2017" name="Plant J.">
        <title>Araport11: a complete reannotation of the Arabidopsis thaliana reference genome.</title>
        <authorList>
            <person name="Cheng C.Y."/>
            <person name="Krishnakumar V."/>
            <person name="Chan A.P."/>
            <person name="Thibaud-Nissen F."/>
            <person name="Schobel S."/>
            <person name="Town C.D."/>
        </authorList>
    </citation>
    <scope>GENOME REANNOTATION</scope>
    <source>
        <strain>cv. Columbia</strain>
    </source>
</reference>
<reference key="4">
    <citation type="journal article" date="2003" name="Science">
        <title>Empirical analysis of transcriptional activity in the Arabidopsis genome.</title>
        <authorList>
            <person name="Yamada K."/>
            <person name="Lim J."/>
            <person name="Dale J.M."/>
            <person name="Chen H."/>
            <person name="Shinn P."/>
            <person name="Palm C.J."/>
            <person name="Southwick A.M."/>
            <person name="Wu H.C."/>
            <person name="Kim C.J."/>
            <person name="Nguyen M."/>
            <person name="Pham P.K."/>
            <person name="Cheuk R.F."/>
            <person name="Karlin-Newmann G."/>
            <person name="Liu S.X."/>
            <person name="Lam B."/>
            <person name="Sakano H."/>
            <person name="Wu T."/>
            <person name="Yu G."/>
            <person name="Miranda M."/>
            <person name="Quach H.L."/>
            <person name="Tripp M."/>
            <person name="Chang C.H."/>
            <person name="Lee J.M."/>
            <person name="Toriumi M.J."/>
            <person name="Chan M.M."/>
            <person name="Tang C.C."/>
            <person name="Onodera C.S."/>
            <person name="Deng J.M."/>
            <person name="Akiyama K."/>
            <person name="Ansari Y."/>
            <person name="Arakawa T."/>
            <person name="Banh J."/>
            <person name="Banno F."/>
            <person name="Bowser L."/>
            <person name="Brooks S.Y."/>
            <person name="Carninci P."/>
            <person name="Chao Q."/>
            <person name="Choy N."/>
            <person name="Enju A."/>
            <person name="Goldsmith A.D."/>
            <person name="Gurjal M."/>
            <person name="Hansen N.F."/>
            <person name="Hayashizaki Y."/>
            <person name="Johnson-Hopson C."/>
            <person name="Hsuan V.W."/>
            <person name="Iida K."/>
            <person name="Karnes M."/>
            <person name="Khan S."/>
            <person name="Koesema E."/>
            <person name="Ishida J."/>
            <person name="Jiang P.X."/>
            <person name="Jones T."/>
            <person name="Kawai J."/>
            <person name="Kamiya A."/>
            <person name="Meyers C."/>
            <person name="Nakajima M."/>
            <person name="Narusaka M."/>
            <person name="Seki M."/>
            <person name="Sakurai T."/>
            <person name="Satou M."/>
            <person name="Tamse R."/>
            <person name="Vaysberg M."/>
            <person name="Wallender E.K."/>
            <person name="Wong C."/>
            <person name="Yamamura Y."/>
            <person name="Yuan S."/>
            <person name="Shinozaki K."/>
            <person name="Davis R.W."/>
            <person name="Theologis A."/>
            <person name="Ecker J.R."/>
        </authorList>
    </citation>
    <scope>NUCLEOTIDE SEQUENCE [LARGE SCALE MRNA]</scope>
    <source>
        <strain>cv. Columbia</strain>
    </source>
</reference>
<organism>
    <name type="scientific">Arabidopsis thaliana</name>
    <name type="common">Mouse-ear cress</name>
    <dbReference type="NCBI Taxonomy" id="3702"/>
    <lineage>
        <taxon>Eukaryota</taxon>
        <taxon>Viridiplantae</taxon>
        <taxon>Streptophyta</taxon>
        <taxon>Embryophyta</taxon>
        <taxon>Tracheophyta</taxon>
        <taxon>Spermatophyta</taxon>
        <taxon>Magnoliopsida</taxon>
        <taxon>eudicotyledons</taxon>
        <taxon>Gunneridae</taxon>
        <taxon>Pentapetalae</taxon>
        <taxon>rosids</taxon>
        <taxon>malvids</taxon>
        <taxon>Brassicales</taxon>
        <taxon>Brassicaceae</taxon>
        <taxon>Camelineae</taxon>
        <taxon>Arabidopsis</taxon>
    </lineage>
</organism>
<protein>
    <recommendedName>
        <fullName evidence="5">GTP cyclohydrolase 1</fullName>
        <ecNumber evidence="3">3.5.4.16</ecNumber>
    </recommendedName>
    <alternativeName>
        <fullName evidence="4">GTP cyclohydrolase I</fullName>
    </alternativeName>
</protein>
<sequence>MGALDEGCLNLELDIGMKNGCIELAFEHQPETLAIQDAVKLLLQGLHEDVNREGIKKTPFRVAKALREGTRGYKQKVKDYVQSALFPEAGLDEGVGQAGGVGGLVVVRDLDHYSYCESCLLPFHVKCHIGYVPSGQRVLGLSKFSRVTDVFAKRLQDPQRLADDICSALQHWVKPAGVAVVLECSHIHFPSLDLDSLNLSSHRGFVKLLVSSGSGVFEDESSNLWGEFQSFLMFKGVKTQALCRNGSSVKEWCPSVKSSSKLSPEVDPEMVSAVVSILKSLGEDPLRKELIATPTRFLKWMLNFQRTNLEMKLNSFNPAKVNGEVKEKRLHCELNMPFWSMCEHHLLPFYGVVHIGYFCAEGSNPNPVGSSLMKAIVHFYGFKLQVQERMTRQIAETLSPLVGGDVIVVAEAGHTCMISRGIEKFGSSTATIAVLGRFSSDNSARAMFLDKIHTTNALKTESSSPF</sequence>
<proteinExistence type="evidence at protein level"/>
<dbReference type="EC" id="3.5.4.16" evidence="3"/>
<dbReference type="EMBL" id="AF489530">
    <property type="protein sequence ID" value="AAM03126.1"/>
    <property type="molecule type" value="mRNA"/>
</dbReference>
<dbReference type="EMBL" id="AC012395">
    <property type="protein sequence ID" value="AAF20219.1"/>
    <property type="molecule type" value="Genomic_DNA"/>
</dbReference>
<dbReference type="EMBL" id="CP002686">
    <property type="protein sequence ID" value="AEE74520.1"/>
    <property type="molecule type" value="Genomic_DNA"/>
</dbReference>
<dbReference type="EMBL" id="AY099882">
    <property type="protein sequence ID" value="AAM20733.1"/>
    <property type="molecule type" value="mRNA"/>
</dbReference>
<dbReference type="EMBL" id="BT006600">
    <property type="protein sequence ID" value="AAP31944.1"/>
    <property type="molecule type" value="mRNA"/>
</dbReference>
<dbReference type="RefSeq" id="NP_187383.1">
    <molecule id="Q9SFV7-1"/>
    <property type="nucleotide sequence ID" value="NM_111607.3"/>
</dbReference>
<dbReference type="SMR" id="Q9SFV7"/>
<dbReference type="BioGRID" id="5250">
    <property type="interactions" value="4"/>
</dbReference>
<dbReference type="FunCoup" id="Q9SFV7">
    <property type="interactions" value="1109"/>
</dbReference>
<dbReference type="IntAct" id="Q9SFV7">
    <property type="interactions" value="3"/>
</dbReference>
<dbReference type="STRING" id="3702.Q9SFV7"/>
<dbReference type="PaxDb" id="3702-AT3G07270.1"/>
<dbReference type="EnsemblPlants" id="AT3G07270.1">
    <molecule id="Q9SFV7-1"/>
    <property type="protein sequence ID" value="AT3G07270.1"/>
    <property type="gene ID" value="AT3G07270"/>
</dbReference>
<dbReference type="GeneID" id="819915"/>
<dbReference type="Gramene" id="AT3G07270.1">
    <molecule id="Q9SFV7-1"/>
    <property type="protein sequence ID" value="AT3G07270.1"/>
    <property type="gene ID" value="AT3G07270"/>
</dbReference>
<dbReference type="KEGG" id="ath:AT3G07270"/>
<dbReference type="Araport" id="AT3G07270"/>
<dbReference type="TAIR" id="AT3G07270"/>
<dbReference type="eggNOG" id="KOG2698">
    <property type="taxonomic scope" value="Eukaryota"/>
</dbReference>
<dbReference type="HOGENOM" id="CLU_039473_0_0_1"/>
<dbReference type="InParanoid" id="Q9SFV7"/>
<dbReference type="OrthoDB" id="4966at2759"/>
<dbReference type="PhylomeDB" id="Q9SFV7"/>
<dbReference type="BioCyc" id="ARA:AT3G07270-MONOMER"/>
<dbReference type="BRENDA" id="3.5.4.16">
    <property type="organism ID" value="399"/>
</dbReference>
<dbReference type="UniPathway" id="UPA00848">
    <property type="reaction ID" value="UER00151"/>
</dbReference>
<dbReference type="PRO" id="PR:Q9SFV7"/>
<dbReference type="Proteomes" id="UP000006548">
    <property type="component" value="Chromosome 3"/>
</dbReference>
<dbReference type="ExpressionAtlas" id="Q9SFV7">
    <property type="expression patterns" value="baseline and differential"/>
</dbReference>
<dbReference type="GO" id="GO:0005525">
    <property type="term" value="F:GTP binding"/>
    <property type="evidence" value="ECO:0007669"/>
    <property type="project" value="UniProtKB-KW"/>
</dbReference>
<dbReference type="GO" id="GO:0003934">
    <property type="term" value="F:GTP cyclohydrolase I activity"/>
    <property type="evidence" value="ECO:0000314"/>
    <property type="project" value="UniProtKB"/>
</dbReference>
<dbReference type="GO" id="GO:0046872">
    <property type="term" value="F:metal ion binding"/>
    <property type="evidence" value="ECO:0007669"/>
    <property type="project" value="UniProtKB-KW"/>
</dbReference>
<dbReference type="GO" id="GO:0046656">
    <property type="term" value="P:folic acid biosynthetic process"/>
    <property type="evidence" value="ECO:0000314"/>
    <property type="project" value="UniProtKB"/>
</dbReference>
<dbReference type="GO" id="GO:0006729">
    <property type="term" value="P:tetrahydrobiopterin biosynthetic process"/>
    <property type="evidence" value="ECO:0007669"/>
    <property type="project" value="UniProtKB-KW"/>
</dbReference>
<dbReference type="GO" id="GO:0046654">
    <property type="term" value="P:tetrahydrofolate biosynthetic process"/>
    <property type="evidence" value="ECO:0007669"/>
    <property type="project" value="InterPro"/>
</dbReference>
<dbReference type="FunFam" id="1.10.286.10:FF:000004">
    <property type="entry name" value="GTP cyclohydrolase 1"/>
    <property type="match status" value="1"/>
</dbReference>
<dbReference type="FunFam" id="3.30.1130.10:FF:000007">
    <property type="entry name" value="GTP cyclohydrolase 1"/>
    <property type="match status" value="1"/>
</dbReference>
<dbReference type="FunFam" id="3.30.1130.10:FF:000008">
    <property type="entry name" value="GTP cyclohydrolase 1"/>
    <property type="match status" value="1"/>
</dbReference>
<dbReference type="FunFam" id="1.10.286.10:FF:000008">
    <property type="entry name" value="GTP cyclohydrolase I 1"/>
    <property type="match status" value="1"/>
</dbReference>
<dbReference type="Gene3D" id="1.10.286.10">
    <property type="match status" value="2"/>
</dbReference>
<dbReference type="Gene3D" id="3.30.1130.10">
    <property type="match status" value="2"/>
</dbReference>
<dbReference type="InterPro" id="IPR043133">
    <property type="entry name" value="GTP-CH-I_C/QueF"/>
</dbReference>
<dbReference type="InterPro" id="IPR043134">
    <property type="entry name" value="GTP-CH-I_N"/>
</dbReference>
<dbReference type="InterPro" id="IPR001474">
    <property type="entry name" value="GTP_CycHdrlase_I"/>
</dbReference>
<dbReference type="InterPro" id="IPR020602">
    <property type="entry name" value="GTP_CycHdrlase_I_dom"/>
</dbReference>
<dbReference type="PANTHER" id="PTHR11109:SF7">
    <property type="entry name" value="GTP CYCLOHYDROLASE 1"/>
    <property type="match status" value="1"/>
</dbReference>
<dbReference type="PANTHER" id="PTHR11109">
    <property type="entry name" value="GTP CYCLOHYDROLASE I"/>
    <property type="match status" value="1"/>
</dbReference>
<dbReference type="Pfam" id="PF01227">
    <property type="entry name" value="GTP_cyclohydroI"/>
    <property type="match status" value="2"/>
</dbReference>
<dbReference type="SUPFAM" id="SSF55620">
    <property type="entry name" value="Tetrahydrobiopterin biosynthesis enzymes-like"/>
    <property type="match status" value="2"/>
</dbReference>
<comment type="function">
    <text evidence="3">GTP cyclohydrolase 1 is the first enzyme in the biosynthetic pathway leading to folic acid.</text>
</comment>
<comment type="catalytic activity">
    <reaction evidence="3">
        <text>GTP + H2O = 7,8-dihydroneopterin 3'-triphosphate + formate + H(+)</text>
        <dbReference type="Rhea" id="RHEA:17473"/>
        <dbReference type="ChEBI" id="CHEBI:15377"/>
        <dbReference type="ChEBI" id="CHEBI:15378"/>
        <dbReference type="ChEBI" id="CHEBI:15740"/>
        <dbReference type="ChEBI" id="CHEBI:37565"/>
        <dbReference type="ChEBI" id="CHEBI:58462"/>
        <dbReference type="EC" id="3.5.4.16"/>
    </reaction>
</comment>
<comment type="pathway">
    <text>Cofactor biosynthesis; 7,8-dihydroneopterin triphosphate biosynthesis; 7,8-dihydroneopterin triphosphate from GTP: step 1/1.</text>
</comment>
<comment type="subunit">
    <text evidence="2">Homodimer.</text>
</comment>
<comment type="alternative products">
    <event type="alternative splicing"/>
    <isoform>
        <id>Q9SFV7-1</id>
        <name>1</name>
        <sequence type="displayed"/>
    </isoform>
    <text>A number of isoforms are produced. According to EST sequences.</text>
</comment>
<comment type="similarity">
    <text evidence="5">Belongs to the GTP cyclohydrolase I family.</text>
</comment>
<gene>
    <name type="primary">GCH1</name>
    <name evidence="4" type="synonym">GCHI</name>
    <name evidence="6" type="ordered locus">At3g07270</name>
    <name evidence="7" type="ORF">T1B9.6</name>
</gene>
<accession>Q9SFV7</accession>
<accession>Q8S3C2</accession>
<feature type="chain" id="PRO_0000430619" description="GTP cyclohydrolase 1">
    <location>
        <begin position="1"/>
        <end position="466"/>
    </location>
</feature>
<feature type="binding site" evidence="1">
    <location>
        <position position="342"/>
    </location>
    <ligand>
        <name>Zn(2+)</name>
        <dbReference type="ChEBI" id="CHEBI:29105"/>
    </ligand>
</feature>
<feature type="binding site" evidence="1">
    <location>
        <position position="345"/>
    </location>
    <ligand>
        <name>Zn(2+)</name>
        <dbReference type="ChEBI" id="CHEBI:29105"/>
    </ligand>
</feature>
<feature type="binding site" evidence="1">
    <location>
        <position position="416"/>
    </location>
    <ligand>
        <name>Zn(2+)</name>
        <dbReference type="ChEBI" id="CHEBI:29105"/>
    </ligand>
</feature>
<feature type="sequence conflict" description="In Ref. 1; AAM03126." evidence="5" ref="1">
    <original>K</original>
    <variation>R</variation>
    <location>
        <position position="18"/>
    </location>
</feature>